<protein>
    <recommendedName>
        <fullName>Phosphatidate cytidylyltransferase, mitochondrial</fullName>
        <ecNumber evidence="1">2.7.7.41</ecNumber>
    </recommendedName>
    <alternativeName>
        <fullName>CDP-diacylglycerol synthase</fullName>
        <shortName>CDP-DAG synthase</shortName>
    </alternativeName>
    <alternativeName>
        <fullName>Mitochondrial translocator assembly and maintenance protein 41 homolog</fullName>
        <shortName>TAM41</shortName>
    </alternativeName>
</protein>
<keyword id="KW-0444">Lipid biosynthesis</keyword>
<keyword id="KW-0443">Lipid metabolism</keyword>
<keyword id="KW-0460">Magnesium</keyword>
<keyword id="KW-0472">Membrane</keyword>
<keyword id="KW-0496">Mitochondrion</keyword>
<keyword id="KW-0999">Mitochondrion inner membrane</keyword>
<keyword id="KW-0548">Nucleotidyltransferase</keyword>
<keyword id="KW-0594">Phospholipid biosynthesis</keyword>
<keyword id="KW-1208">Phospholipid metabolism</keyword>
<keyword id="KW-1185">Reference proteome</keyword>
<keyword id="KW-0808">Transferase</keyword>
<reference key="1">
    <citation type="journal article" date="2003" name="PLoS Biol.">
        <title>The genome sequence of Caenorhabditis briggsae: a platform for comparative genomics.</title>
        <authorList>
            <person name="Stein L.D."/>
            <person name="Bao Z."/>
            <person name="Blasiar D."/>
            <person name="Blumenthal T."/>
            <person name="Brent M.R."/>
            <person name="Chen N."/>
            <person name="Chinwalla A."/>
            <person name="Clarke L."/>
            <person name="Clee C."/>
            <person name="Coghlan A."/>
            <person name="Coulson A."/>
            <person name="D'Eustachio P."/>
            <person name="Fitch D.H.A."/>
            <person name="Fulton L.A."/>
            <person name="Fulton R.E."/>
            <person name="Griffiths-Jones S."/>
            <person name="Harris T.W."/>
            <person name="Hillier L.W."/>
            <person name="Kamath R."/>
            <person name="Kuwabara P.E."/>
            <person name="Mardis E.R."/>
            <person name="Marra M.A."/>
            <person name="Miner T.L."/>
            <person name="Minx P."/>
            <person name="Mullikin J.C."/>
            <person name="Plumb R.W."/>
            <person name="Rogers J."/>
            <person name="Schein J.E."/>
            <person name="Sohrmann M."/>
            <person name="Spieth J."/>
            <person name="Stajich J.E."/>
            <person name="Wei C."/>
            <person name="Willey D."/>
            <person name="Wilson R.K."/>
            <person name="Durbin R.M."/>
            <person name="Waterston R.H."/>
        </authorList>
    </citation>
    <scope>NUCLEOTIDE SEQUENCE [LARGE SCALE GENOMIC DNA]</scope>
    <source>
        <strain>AF16</strain>
    </source>
</reference>
<accession>Q61X59</accession>
<accession>A8WW89</accession>
<organism>
    <name type="scientific">Caenorhabditis briggsae</name>
    <dbReference type="NCBI Taxonomy" id="6238"/>
    <lineage>
        <taxon>Eukaryota</taxon>
        <taxon>Metazoa</taxon>
        <taxon>Ecdysozoa</taxon>
        <taxon>Nematoda</taxon>
        <taxon>Chromadorea</taxon>
        <taxon>Rhabditida</taxon>
        <taxon>Rhabditina</taxon>
        <taxon>Rhabditomorpha</taxon>
        <taxon>Rhabditoidea</taxon>
        <taxon>Rhabditidae</taxon>
        <taxon>Peloderinae</taxon>
        <taxon>Caenorhabditis</taxon>
    </lineage>
</organism>
<proteinExistence type="inferred from homology"/>
<sequence length="321" mass="36705">MDEYRELISVLPLDTVEYAFAYGSGAIQQKDENKAEKMVDFVVVTKDAQEFHKANIAKNPQHYSLLRLLGPKMLEKIQCNFAARVYYNTHVNVGKRKIKYGIISYENVKQDLLDWRWIYISGRLHKPVLDVIKPKDDMCDLVTENRRSALHSALLLLPESFTLKQLFHQIVGLSYTGDFRMIVGEDKNKIMKIVEGNYEELMRVYEPLMNDDARLSVMSPAKVIQDGSTTAIYHRLNLLPSEVLNQIQKNMNKAQKRQRDAEEVIFSLAHRHDVAATVETAIGGIIRPISFSQTAKNAFSAGMTRSVIYSLAKMSKFLKSK</sequence>
<dbReference type="EC" id="2.7.7.41" evidence="1"/>
<dbReference type="EMBL" id="HE600956">
    <property type="protein sequence ID" value="CAP24898.1"/>
    <property type="molecule type" value="Genomic_DNA"/>
</dbReference>
<dbReference type="RefSeq" id="XP_002639511.1">
    <property type="nucleotide sequence ID" value="XM_002639465.1"/>
</dbReference>
<dbReference type="SMR" id="Q61X59"/>
<dbReference type="FunCoup" id="Q61X59">
    <property type="interactions" value="1780"/>
</dbReference>
<dbReference type="STRING" id="6238.Q61X59"/>
<dbReference type="EnsemblMetazoa" id="CBG04116.1">
    <property type="protein sequence ID" value="CBG04116.1"/>
    <property type="gene ID" value="WBGene00026852"/>
</dbReference>
<dbReference type="GeneID" id="8581504"/>
<dbReference type="KEGG" id="cbr:CBG_04116"/>
<dbReference type="CTD" id="8581504"/>
<dbReference type="WormBase" id="CBG04116">
    <property type="protein sequence ID" value="CBP01061"/>
    <property type="gene ID" value="WBGene00026852"/>
</dbReference>
<dbReference type="eggNOG" id="KOG2986">
    <property type="taxonomic scope" value="Eukaryota"/>
</dbReference>
<dbReference type="HOGENOM" id="CLU_030279_1_2_1"/>
<dbReference type="InParanoid" id="Q61X59"/>
<dbReference type="OMA" id="HAENMHR"/>
<dbReference type="UniPathway" id="UPA00557">
    <property type="reaction ID" value="UER00614"/>
</dbReference>
<dbReference type="Proteomes" id="UP000008549">
    <property type="component" value="Unassembled WGS sequence"/>
</dbReference>
<dbReference type="GO" id="GO:0005743">
    <property type="term" value="C:mitochondrial inner membrane"/>
    <property type="evidence" value="ECO:0007669"/>
    <property type="project" value="UniProtKB-SubCell"/>
</dbReference>
<dbReference type="GO" id="GO:0005739">
    <property type="term" value="C:mitochondrion"/>
    <property type="evidence" value="ECO:0000318"/>
    <property type="project" value="GO_Central"/>
</dbReference>
<dbReference type="GO" id="GO:0004605">
    <property type="term" value="F:phosphatidate cytidylyltransferase activity"/>
    <property type="evidence" value="ECO:0000250"/>
    <property type="project" value="UniProtKB"/>
</dbReference>
<dbReference type="GO" id="GO:0032049">
    <property type="term" value="P:cardiolipin biosynthetic process"/>
    <property type="evidence" value="ECO:0000250"/>
    <property type="project" value="UniProtKB"/>
</dbReference>
<dbReference type="GO" id="GO:0016024">
    <property type="term" value="P:CDP-diacylglycerol biosynthetic process"/>
    <property type="evidence" value="ECO:0000318"/>
    <property type="project" value="GO_Central"/>
</dbReference>
<dbReference type="InterPro" id="IPR015222">
    <property type="entry name" value="Tam41"/>
</dbReference>
<dbReference type="PANTHER" id="PTHR13619">
    <property type="entry name" value="PHOSPHATIDATE CYTIDYLYLTRANSFERASE, MITOCHONDRIAL"/>
    <property type="match status" value="1"/>
</dbReference>
<dbReference type="PANTHER" id="PTHR13619:SF0">
    <property type="entry name" value="PHOSPHATIDATE CYTIDYLYLTRANSFERASE, MITOCHONDRIAL"/>
    <property type="match status" value="1"/>
</dbReference>
<dbReference type="Pfam" id="PF09139">
    <property type="entry name" value="Tam41_Mmp37"/>
    <property type="match status" value="1"/>
</dbReference>
<dbReference type="PIRSF" id="PIRSF028840">
    <property type="entry name" value="Mmp37"/>
    <property type="match status" value="1"/>
</dbReference>
<comment type="function">
    <text evidence="1">Catalyzes the formation of CDP-diacylglycerol (CDP-DAG) from phosphatidic acid (PA) in the mitochondrial inner membrane. Required for the biosynthesis of the dimeric phospholipid cardiolipin, which stabilizes supercomplexes of the mitochondrial respiratory chain in the mitochondrial inner membrane.</text>
</comment>
<comment type="catalytic activity">
    <reaction evidence="1">
        <text>a 1,2-diacyl-sn-glycero-3-phosphate + CTP + H(+) = a CDP-1,2-diacyl-sn-glycerol + diphosphate</text>
        <dbReference type="Rhea" id="RHEA:16229"/>
        <dbReference type="ChEBI" id="CHEBI:15378"/>
        <dbReference type="ChEBI" id="CHEBI:33019"/>
        <dbReference type="ChEBI" id="CHEBI:37563"/>
        <dbReference type="ChEBI" id="CHEBI:58332"/>
        <dbReference type="ChEBI" id="CHEBI:58608"/>
        <dbReference type="EC" id="2.7.7.41"/>
    </reaction>
    <physiologicalReaction direction="left-to-right" evidence="1">
        <dbReference type="Rhea" id="RHEA:16230"/>
    </physiologicalReaction>
</comment>
<comment type="cofactor">
    <cofactor evidence="1">
        <name>Mg(2+)</name>
        <dbReference type="ChEBI" id="CHEBI:18420"/>
    </cofactor>
    <cofactor evidence="1">
        <name>Co(2+)</name>
        <dbReference type="ChEBI" id="CHEBI:48828"/>
    </cofactor>
    <cofactor evidence="1">
        <name>Cu(2+)</name>
        <dbReference type="ChEBI" id="CHEBI:29036"/>
    </cofactor>
    <text evidence="1">Magnesium. Also active with cobalt or copper.</text>
</comment>
<comment type="pathway">
    <text evidence="1">Phospholipid metabolism; CDP-diacylglycerol biosynthesis; CDP-diacylglycerol from sn-glycerol 3-phosphate: step 3/3.</text>
</comment>
<comment type="subcellular location">
    <subcellularLocation>
        <location evidence="1">Mitochondrion inner membrane</location>
        <topology evidence="1">Peripheral membrane protein</topology>
        <orientation evidence="1">Matrix side</orientation>
    </subcellularLocation>
</comment>
<comment type="similarity">
    <text evidence="2">Belongs to the TAM41 family.</text>
</comment>
<gene>
    <name type="ORF">CBG04116</name>
</gene>
<name>TAM41_CAEBR</name>
<evidence type="ECO:0000250" key="1">
    <source>
        <dbReference type="UniProtKB" id="P53230"/>
    </source>
</evidence>
<evidence type="ECO:0000305" key="2"/>
<feature type="chain" id="PRO_0000248358" description="Phosphatidate cytidylyltransferase, mitochondrial">
    <location>
        <begin position="1"/>
        <end position="321"/>
    </location>
</feature>